<name>PANCY_SYNJB</name>
<organism>
    <name type="scientific">Synechococcus sp. (strain JA-2-3B'a(2-13))</name>
    <name type="common">Cyanobacteria bacterium Yellowstone B-Prime</name>
    <dbReference type="NCBI Taxonomy" id="321332"/>
    <lineage>
        <taxon>Bacteria</taxon>
        <taxon>Bacillati</taxon>
        <taxon>Cyanobacteriota</taxon>
        <taxon>Cyanophyceae</taxon>
        <taxon>Synechococcales</taxon>
        <taxon>Synechococcaceae</taxon>
        <taxon>Synechococcus</taxon>
    </lineage>
</organism>
<comment type="function">
    <text evidence="1">Catalyzes the condensation of pantoate with beta-alanine in an ATP-dependent reaction via a pantoyl-adenylate intermediate.</text>
</comment>
<comment type="function">
    <text evidence="1">Catalyzes the transfer of a phosphate group from ATP to either CMP or dCMP to form CDP or dCDP and ADP, respectively.</text>
</comment>
<comment type="catalytic activity">
    <reaction evidence="1">
        <text>(R)-pantoate + beta-alanine + ATP = (R)-pantothenate + AMP + diphosphate + H(+)</text>
        <dbReference type="Rhea" id="RHEA:10912"/>
        <dbReference type="ChEBI" id="CHEBI:15378"/>
        <dbReference type="ChEBI" id="CHEBI:15980"/>
        <dbReference type="ChEBI" id="CHEBI:29032"/>
        <dbReference type="ChEBI" id="CHEBI:30616"/>
        <dbReference type="ChEBI" id="CHEBI:33019"/>
        <dbReference type="ChEBI" id="CHEBI:57966"/>
        <dbReference type="ChEBI" id="CHEBI:456215"/>
        <dbReference type="EC" id="6.3.2.1"/>
    </reaction>
</comment>
<comment type="catalytic activity">
    <reaction evidence="1">
        <text>CMP + ATP = CDP + ADP</text>
        <dbReference type="Rhea" id="RHEA:11600"/>
        <dbReference type="ChEBI" id="CHEBI:30616"/>
        <dbReference type="ChEBI" id="CHEBI:58069"/>
        <dbReference type="ChEBI" id="CHEBI:60377"/>
        <dbReference type="ChEBI" id="CHEBI:456216"/>
        <dbReference type="EC" id="2.7.4.25"/>
    </reaction>
</comment>
<comment type="catalytic activity">
    <reaction evidence="1">
        <text>dCMP + ATP = dCDP + ADP</text>
        <dbReference type="Rhea" id="RHEA:25094"/>
        <dbReference type="ChEBI" id="CHEBI:30616"/>
        <dbReference type="ChEBI" id="CHEBI:57566"/>
        <dbReference type="ChEBI" id="CHEBI:58593"/>
        <dbReference type="ChEBI" id="CHEBI:456216"/>
        <dbReference type="EC" id="2.7.4.25"/>
    </reaction>
</comment>
<comment type="pathway">
    <text evidence="1">Cofactor biosynthesis; (R)-pantothenate biosynthesis; (R)-pantothenate from (R)-pantoate and beta-alanine: step 1/1.</text>
</comment>
<comment type="subcellular location">
    <subcellularLocation>
        <location evidence="1">Cytoplasm</location>
    </subcellularLocation>
</comment>
<comment type="similarity">
    <text evidence="1">In the N-terminal section; belongs to the pantothenate synthetase family.</text>
</comment>
<comment type="similarity">
    <text evidence="1">In the C-terminal section; belongs to the cytidylate kinase family. Type 1 subfamily.</text>
</comment>
<reference key="1">
    <citation type="journal article" date="2007" name="ISME J.">
        <title>Population level functional diversity in a microbial community revealed by comparative genomic and metagenomic analyses.</title>
        <authorList>
            <person name="Bhaya D."/>
            <person name="Grossman A.R."/>
            <person name="Steunou A.-S."/>
            <person name="Khuri N."/>
            <person name="Cohan F.M."/>
            <person name="Hamamura N."/>
            <person name="Melendrez M.C."/>
            <person name="Bateson M.M."/>
            <person name="Ward D.M."/>
            <person name="Heidelberg J.F."/>
        </authorList>
    </citation>
    <scope>NUCLEOTIDE SEQUENCE [LARGE SCALE GENOMIC DNA]</scope>
    <source>
        <strain>JA-2-3B'a(2-13)</strain>
    </source>
</reference>
<evidence type="ECO:0000255" key="1">
    <source>
        <dbReference type="HAMAP-Rule" id="MF_01349"/>
    </source>
</evidence>
<evidence type="ECO:0000256" key="2">
    <source>
        <dbReference type="SAM" id="MobiDB-lite"/>
    </source>
</evidence>
<proteinExistence type="inferred from homology"/>
<dbReference type="EC" id="6.3.2.1" evidence="1"/>
<dbReference type="EC" id="2.7.4.25" evidence="1"/>
<dbReference type="EMBL" id="CP000240">
    <property type="protein sequence ID" value="ABD03359.1"/>
    <property type="molecule type" value="Genomic_DNA"/>
</dbReference>
<dbReference type="RefSeq" id="WP_011433988.1">
    <property type="nucleotide sequence ID" value="NC_007776.1"/>
</dbReference>
<dbReference type="SMR" id="Q2JJ30"/>
<dbReference type="STRING" id="321332.CYB_2425"/>
<dbReference type="KEGG" id="cyb:CYB_2425"/>
<dbReference type="eggNOG" id="COG0283">
    <property type="taxonomic scope" value="Bacteria"/>
</dbReference>
<dbReference type="eggNOG" id="COG0414">
    <property type="taxonomic scope" value="Bacteria"/>
</dbReference>
<dbReference type="HOGENOM" id="CLU_037427_0_0_3"/>
<dbReference type="OrthoDB" id="9773087at2"/>
<dbReference type="UniPathway" id="UPA00028">
    <property type="reaction ID" value="UER00005"/>
</dbReference>
<dbReference type="Proteomes" id="UP000001938">
    <property type="component" value="Chromosome"/>
</dbReference>
<dbReference type="GO" id="GO:0005829">
    <property type="term" value="C:cytosol"/>
    <property type="evidence" value="ECO:0007669"/>
    <property type="project" value="TreeGrafter"/>
</dbReference>
<dbReference type="GO" id="GO:0005524">
    <property type="term" value="F:ATP binding"/>
    <property type="evidence" value="ECO:0007669"/>
    <property type="project" value="UniProtKB-UniRule"/>
</dbReference>
<dbReference type="GO" id="GO:0036430">
    <property type="term" value="F:CMP kinase activity"/>
    <property type="evidence" value="ECO:0007669"/>
    <property type="project" value="RHEA"/>
</dbReference>
<dbReference type="GO" id="GO:0036431">
    <property type="term" value="F:dCMP kinase activity"/>
    <property type="evidence" value="ECO:0007669"/>
    <property type="project" value="RHEA"/>
</dbReference>
<dbReference type="GO" id="GO:0004592">
    <property type="term" value="F:pantoate-beta-alanine ligase activity"/>
    <property type="evidence" value="ECO:0007669"/>
    <property type="project" value="UniProtKB-UniRule"/>
</dbReference>
<dbReference type="GO" id="GO:0015949">
    <property type="term" value="P:nucleobase-containing small molecule interconversion"/>
    <property type="evidence" value="ECO:0007669"/>
    <property type="project" value="TreeGrafter"/>
</dbReference>
<dbReference type="GO" id="GO:0015940">
    <property type="term" value="P:pantothenate biosynthetic process"/>
    <property type="evidence" value="ECO:0007669"/>
    <property type="project" value="UniProtKB-UniRule"/>
</dbReference>
<dbReference type="GO" id="GO:0006220">
    <property type="term" value="P:pyrimidine nucleotide metabolic process"/>
    <property type="evidence" value="ECO:0007669"/>
    <property type="project" value="UniProtKB-UniRule"/>
</dbReference>
<dbReference type="CDD" id="cd02020">
    <property type="entry name" value="CMPK"/>
    <property type="match status" value="1"/>
</dbReference>
<dbReference type="CDD" id="cd00560">
    <property type="entry name" value="PanC"/>
    <property type="match status" value="1"/>
</dbReference>
<dbReference type="Gene3D" id="3.40.50.620">
    <property type="entry name" value="HUPs"/>
    <property type="match status" value="1"/>
</dbReference>
<dbReference type="Gene3D" id="3.40.50.300">
    <property type="entry name" value="P-loop containing nucleotide triphosphate hydrolases"/>
    <property type="match status" value="1"/>
</dbReference>
<dbReference type="Gene3D" id="3.30.1300.10">
    <property type="entry name" value="Pantoate-beta-alanine ligase, C-terminal domain"/>
    <property type="match status" value="1"/>
</dbReference>
<dbReference type="HAMAP" id="MF_00238">
    <property type="entry name" value="Cytidyl_kinase_type1"/>
    <property type="match status" value="1"/>
</dbReference>
<dbReference type="HAMAP" id="MF_00158">
    <property type="entry name" value="PanC"/>
    <property type="match status" value="1"/>
</dbReference>
<dbReference type="HAMAP" id="MF_01349">
    <property type="entry name" value="PanCY"/>
    <property type="match status" value="1"/>
</dbReference>
<dbReference type="InterPro" id="IPR004821">
    <property type="entry name" value="Cyt_trans-like"/>
</dbReference>
<dbReference type="InterPro" id="IPR003136">
    <property type="entry name" value="Cytidylate_kin"/>
</dbReference>
<dbReference type="InterPro" id="IPR011994">
    <property type="entry name" value="Cytidylate_kinase_dom"/>
</dbReference>
<dbReference type="InterPro" id="IPR027417">
    <property type="entry name" value="P-loop_NTPase"/>
</dbReference>
<dbReference type="InterPro" id="IPR003721">
    <property type="entry name" value="Pantoate_ligase"/>
</dbReference>
<dbReference type="InterPro" id="IPR024894">
    <property type="entry name" value="Pantoate_ligase/cytidylate_kin"/>
</dbReference>
<dbReference type="InterPro" id="IPR042176">
    <property type="entry name" value="Pantoate_ligase_C"/>
</dbReference>
<dbReference type="InterPro" id="IPR014729">
    <property type="entry name" value="Rossmann-like_a/b/a_fold"/>
</dbReference>
<dbReference type="NCBIfam" id="TIGR00017">
    <property type="entry name" value="cmk"/>
    <property type="match status" value="1"/>
</dbReference>
<dbReference type="NCBIfam" id="TIGR00125">
    <property type="entry name" value="cyt_tran_rel"/>
    <property type="match status" value="1"/>
</dbReference>
<dbReference type="NCBIfam" id="TIGR00018">
    <property type="entry name" value="panC"/>
    <property type="match status" value="1"/>
</dbReference>
<dbReference type="NCBIfam" id="NF010004">
    <property type="entry name" value="PRK13477.1"/>
    <property type="match status" value="1"/>
</dbReference>
<dbReference type="PANTHER" id="PTHR21299:SF2">
    <property type="entry name" value="CYTIDYLATE KINASE"/>
    <property type="match status" value="1"/>
</dbReference>
<dbReference type="PANTHER" id="PTHR21299">
    <property type="entry name" value="CYTIDYLATE KINASE/PANTOATE-BETA-ALANINE LIGASE"/>
    <property type="match status" value="1"/>
</dbReference>
<dbReference type="Pfam" id="PF02224">
    <property type="entry name" value="Cytidylate_kin"/>
    <property type="match status" value="1"/>
</dbReference>
<dbReference type="Pfam" id="PF02569">
    <property type="entry name" value="Pantoate_ligase"/>
    <property type="match status" value="1"/>
</dbReference>
<dbReference type="SUPFAM" id="SSF52374">
    <property type="entry name" value="Nucleotidylyl transferase"/>
    <property type="match status" value="1"/>
</dbReference>
<dbReference type="SUPFAM" id="SSF52540">
    <property type="entry name" value="P-loop containing nucleoside triphosphate hydrolases"/>
    <property type="match status" value="1"/>
</dbReference>
<keyword id="KW-0067">ATP-binding</keyword>
<keyword id="KW-0963">Cytoplasm</keyword>
<keyword id="KW-0418">Kinase</keyword>
<keyword id="KW-0436">Ligase</keyword>
<keyword id="KW-0511">Multifunctional enzyme</keyword>
<keyword id="KW-0547">Nucleotide-binding</keyword>
<keyword id="KW-0566">Pantothenate biosynthesis</keyword>
<keyword id="KW-1185">Reference proteome</keyword>
<keyword id="KW-0808">Transferase</keyword>
<feature type="chain" id="PRO_0000239796" description="Bifunctional pantoate ligase/cytidylate kinase">
    <location>
        <begin position="1"/>
        <end position="542"/>
    </location>
</feature>
<feature type="region of interest" description="Pantoate--beta-alanine ligase" evidence="1">
    <location>
        <begin position="1"/>
        <end position="280"/>
    </location>
</feature>
<feature type="region of interest" description="Cytidylate kinase" evidence="1">
    <location>
        <begin position="281"/>
        <end position="542"/>
    </location>
</feature>
<feature type="region of interest" description="Disordered" evidence="2">
    <location>
        <begin position="287"/>
        <end position="311"/>
    </location>
</feature>
<feature type="active site" description="Proton donor" evidence="1">
    <location>
        <position position="35"/>
    </location>
</feature>
<feature type="binding site" evidence="1">
    <location>
        <begin position="28"/>
        <end position="35"/>
    </location>
    <ligand>
        <name>ATP</name>
        <dbReference type="ChEBI" id="CHEBI:30616"/>
    </ligand>
</feature>
<feature type="binding site" evidence="1">
    <location>
        <position position="59"/>
    </location>
    <ligand>
        <name>(R)-pantoate</name>
        <dbReference type="ChEBI" id="CHEBI:15980"/>
    </ligand>
</feature>
<feature type="binding site" evidence="1">
    <location>
        <position position="59"/>
    </location>
    <ligand>
        <name>beta-alanine</name>
        <dbReference type="ChEBI" id="CHEBI:57966"/>
    </ligand>
</feature>
<feature type="binding site" evidence="1">
    <location>
        <begin position="150"/>
        <end position="153"/>
    </location>
    <ligand>
        <name>ATP</name>
        <dbReference type="ChEBI" id="CHEBI:30616"/>
    </ligand>
</feature>
<feature type="binding site" evidence="1">
    <location>
        <position position="156"/>
    </location>
    <ligand>
        <name>(R)-pantoate</name>
        <dbReference type="ChEBI" id="CHEBI:15980"/>
    </ligand>
</feature>
<feature type="binding site" evidence="1">
    <location>
        <position position="179"/>
    </location>
    <ligand>
        <name>ATP</name>
        <dbReference type="ChEBI" id="CHEBI:30616"/>
    </ligand>
</feature>
<feature type="binding site" evidence="1">
    <location>
        <begin position="187"/>
        <end position="190"/>
    </location>
    <ligand>
        <name>ATP</name>
        <dbReference type="ChEBI" id="CHEBI:30616"/>
    </ligand>
</feature>
<protein>
    <recommendedName>
        <fullName evidence="1">Bifunctional pantoate ligase/cytidylate kinase</fullName>
    </recommendedName>
    <domain>
        <recommendedName>
            <fullName evidence="1">Pantothenate synthetase</fullName>
            <shortName evidence="1">PS</shortName>
            <ecNumber evidence="1">6.3.2.1</ecNumber>
        </recommendedName>
        <alternativeName>
            <fullName evidence="1">Pantoate--beta-alanine ligase</fullName>
        </alternativeName>
        <alternativeName>
            <fullName evidence="1">Pantoate-activating enzyme</fullName>
        </alternativeName>
    </domain>
    <domain>
        <recommendedName>
            <fullName evidence="1">Cytidylate kinase</fullName>
            <shortName evidence="1">CK</shortName>
            <ecNumber evidence="1">2.7.4.25</ecNumber>
        </recommendedName>
        <alternativeName>
            <fullName evidence="1">Cytidine monophosphate kinase</fullName>
            <shortName evidence="1">CMP kinase</shortName>
        </alternativeName>
    </domain>
</protein>
<gene>
    <name evidence="1" type="primary">panC/cmk</name>
    <name type="ordered locus">CYB_2425</name>
</gene>
<sequence>MHWLRTVAALREQVADWRGSTVGLVPTMGSLHEGHLSLIRRCRQECDHTVVSIFVNPLQFGPNEDWDRYPRDEEGDRALCEAAGVDVVFAPDPQEMGADPATGSDRTWVMPPESLLQTLCAPHRPGHFRGVATIVLQLLNLVQPQRAYFGQKDAQQLAIIQRLVRDLQIPTTIVPCSTVREADGLACSSRNRYLSAAERQVAAGLYRALRRGYDHWQAGDPSAEGILAAARAELEHTPELQLQYLELVDPQTLQPLPRVEDKGLLAIAAYVGQTRLIDNLLLSPEQGDPLPERVQHAAPPSSGTTSPPRRPLIAIDGPAGAGKSTVARAVAAQLQLLYLDTGAMYRAITWLALQRGIPLDDAEQLTQLAAQTQLTLQSGTSSTEPTRIWADGEEITQAIRSPEVTRWVSHVAAVPGVRQELVKRQRSIGRDGGAVLEGRDIGTHVFPDAELKVFLTASVGERAQRRQHQLQAQGQMVPLEELKAQIEQRDRRDSERLISPLRPAPDAILIDTDHLSQSEVQDKIVMLYRQLLERSGPARLDQ</sequence>
<accession>Q2JJ30</accession>